<keyword id="KW-0433">Leucine-rich repeat</keyword>
<keyword id="KW-0539">Nucleus</keyword>
<keyword id="KW-1185">Reference proteome</keyword>
<keyword id="KW-0677">Repeat</keyword>
<keyword id="KW-0687">Ribonucleoprotein</keyword>
<keyword id="KW-0694">RNA-binding</keyword>
<dbReference type="EMBL" id="X69137">
    <property type="protein sequence ID" value="CAA48890.1"/>
    <property type="molecule type" value="mRNA"/>
</dbReference>
<dbReference type="EMBL" id="AC000132">
    <property type="protein sequence ID" value="AAB60746.1"/>
    <property type="molecule type" value="Genomic_DNA"/>
</dbReference>
<dbReference type="EMBL" id="CP002684">
    <property type="protein sequence ID" value="AEE28489.1"/>
    <property type="molecule type" value="Genomic_DNA"/>
</dbReference>
<dbReference type="EMBL" id="AY059902">
    <property type="protein sequence ID" value="AAL24384.1"/>
    <property type="molecule type" value="mRNA"/>
</dbReference>
<dbReference type="EMBL" id="BT000143">
    <property type="protein sequence ID" value="AAN15462.1"/>
    <property type="molecule type" value="mRNA"/>
</dbReference>
<dbReference type="EMBL" id="Z18200">
    <property type="protein sequence ID" value="CAA79133.1"/>
    <property type="molecule type" value="mRNA"/>
</dbReference>
<dbReference type="PIR" id="E86231">
    <property type="entry name" value="E86231"/>
</dbReference>
<dbReference type="PIR" id="S30580">
    <property type="entry name" value="S30580"/>
</dbReference>
<dbReference type="RefSeq" id="NP_172447.1">
    <property type="nucleotide sequence ID" value="NM_100848.4"/>
</dbReference>
<dbReference type="SMR" id="P43333"/>
<dbReference type="BioGRID" id="22746">
    <property type="interactions" value="9"/>
</dbReference>
<dbReference type="FunCoup" id="P43333">
    <property type="interactions" value="5129"/>
</dbReference>
<dbReference type="IntAct" id="P43333">
    <property type="interactions" value="4"/>
</dbReference>
<dbReference type="MINT" id="P43333"/>
<dbReference type="STRING" id="3702.P43333"/>
<dbReference type="GlyGen" id="P43333">
    <property type="glycosylation" value="1 site"/>
</dbReference>
<dbReference type="iPTMnet" id="P43333"/>
<dbReference type="PaxDb" id="3702-AT1G09760.1"/>
<dbReference type="ProteomicsDB" id="226657"/>
<dbReference type="EnsemblPlants" id="AT1G09760.1">
    <property type="protein sequence ID" value="AT1G09760.1"/>
    <property type="gene ID" value="AT1G09760"/>
</dbReference>
<dbReference type="GeneID" id="837505"/>
<dbReference type="Gramene" id="AT1G09760.1">
    <property type="protein sequence ID" value="AT1G09760.1"/>
    <property type="gene ID" value="AT1G09760"/>
</dbReference>
<dbReference type="KEGG" id="ath:AT1G09760"/>
<dbReference type="Araport" id="AT1G09760"/>
<dbReference type="TAIR" id="AT1G09760">
    <property type="gene designation" value="U2A'"/>
</dbReference>
<dbReference type="eggNOG" id="KOG1644">
    <property type="taxonomic scope" value="Eukaryota"/>
</dbReference>
<dbReference type="HOGENOM" id="CLU_061027_0_1_1"/>
<dbReference type="InParanoid" id="P43333"/>
<dbReference type="OMA" id="PNYREYM"/>
<dbReference type="PhylomeDB" id="P43333"/>
<dbReference type="CD-CODE" id="4299E36E">
    <property type="entry name" value="Nucleolus"/>
</dbReference>
<dbReference type="PRO" id="PR:P43333"/>
<dbReference type="Proteomes" id="UP000006548">
    <property type="component" value="Chromosome 1"/>
</dbReference>
<dbReference type="ExpressionAtlas" id="P43333">
    <property type="expression patterns" value="baseline and differential"/>
</dbReference>
<dbReference type="GO" id="GO:0015030">
    <property type="term" value="C:Cajal body"/>
    <property type="evidence" value="ECO:0000314"/>
    <property type="project" value="TAIR"/>
</dbReference>
<dbReference type="GO" id="GO:0005737">
    <property type="term" value="C:cytoplasm"/>
    <property type="evidence" value="ECO:0000314"/>
    <property type="project" value="TAIR"/>
</dbReference>
<dbReference type="GO" id="GO:0016607">
    <property type="term" value="C:nuclear speck"/>
    <property type="evidence" value="ECO:0000314"/>
    <property type="project" value="UniProtKB"/>
</dbReference>
<dbReference type="GO" id="GO:0005730">
    <property type="term" value="C:nucleolus"/>
    <property type="evidence" value="ECO:0007005"/>
    <property type="project" value="TAIR"/>
</dbReference>
<dbReference type="GO" id="GO:0005654">
    <property type="term" value="C:nucleoplasm"/>
    <property type="evidence" value="ECO:0000314"/>
    <property type="project" value="TAIR"/>
</dbReference>
<dbReference type="GO" id="GO:0005634">
    <property type="term" value="C:nucleus"/>
    <property type="evidence" value="ECO:0007005"/>
    <property type="project" value="TAIR"/>
</dbReference>
<dbReference type="GO" id="GO:1990904">
    <property type="term" value="C:ribonucleoprotein complex"/>
    <property type="evidence" value="ECO:0007669"/>
    <property type="project" value="UniProtKB-KW"/>
</dbReference>
<dbReference type="GO" id="GO:0030620">
    <property type="term" value="F:U2 snRNA binding"/>
    <property type="evidence" value="ECO:0007669"/>
    <property type="project" value="InterPro"/>
</dbReference>
<dbReference type="GO" id="GO:0000398">
    <property type="term" value="P:mRNA splicing, via spliceosome"/>
    <property type="evidence" value="ECO:0000314"/>
    <property type="project" value="TAIR"/>
</dbReference>
<dbReference type="FunFam" id="3.80.10.10:FF:000026">
    <property type="entry name" value="U2 small nuclear ribonucleoprotein A"/>
    <property type="match status" value="1"/>
</dbReference>
<dbReference type="Gene3D" id="3.80.10.10">
    <property type="entry name" value="Ribonuclease Inhibitor"/>
    <property type="match status" value="1"/>
</dbReference>
<dbReference type="InterPro" id="IPR032675">
    <property type="entry name" value="LRR_dom_sf"/>
</dbReference>
<dbReference type="InterPro" id="IPR044640">
    <property type="entry name" value="RU2A"/>
</dbReference>
<dbReference type="InterPro" id="IPR003603">
    <property type="entry name" value="U2A'_phosphoprotein32A_C"/>
</dbReference>
<dbReference type="PANTHER" id="PTHR10552">
    <property type="entry name" value="U2 SMALL NUCLEAR RIBONUCLEOPROTEIN A"/>
    <property type="match status" value="1"/>
</dbReference>
<dbReference type="PANTHER" id="PTHR10552:SF6">
    <property type="entry name" value="U2 SMALL NUCLEAR RIBONUCLEOPROTEIN A"/>
    <property type="match status" value="1"/>
</dbReference>
<dbReference type="Pfam" id="PF14580">
    <property type="entry name" value="LRR_9"/>
    <property type="match status" value="1"/>
</dbReference>
<dbReference type="SMART" id="SM00446">
    <property type="entry name" value="LRRcap"/>
    <property type="match status" value="1"/>
</dbReference>
<dbReference type="SUPFAM" id="SSF52058">
    <property type="entry name" value="L domain-like"/>
    <property type="match status" value="1"/>
</dbReference>
<comment type="function">
    <text evidence="1">This protein is associated with sn-RNP U2. It helps the A' protein to bind stem loop IV of U2 snRNA (By similarity).</text>
</comment>
<comment type="subcellular location">
    <subcellularLocation>
        <location evidence="5">Nucleus</location>
    </subcellularLocation>
    <subcellularLocation>
        <location evidence="2 3">Nucleus speckle</location>
    </subcellularLocation>
    <text evidence="2 3">Colocalizes in nuclear speckles with DRT111/RSN2/SFPS.</text>
</comment>
<comment type="similarity">
    <text evidence="5">Belongs to the U2 small nuclear ribonucleoprotein A family.</text>
</comment>
<accession>P43333</accession>
<accession>O04497</accession>
<proteinExistence type="evidence at transcript level"/>
<evidence type="ECO:0000250" key="1"/>
<evidence type="ECO:0000269" key="2">
    <source>
    </source>
</evidence>
<evidence type="ECO:0000269" key="3">
    <source>
    </source>
</evidence>
<evidence type="ECO:0000303" key="4">
    <source>
    </source>
</evidence>
<evidence type="ECO:0000305" key="5"/>
<evidence type="ECO:0000312" key="6">
    <source>
        <dbReference type="Araport" id="AT1G09760"/>
    </source>
</evidence>
<evidence type="ECO:0000312" key="7">
    <source>
        <dbReference type="EMBL" id="AAB60746.1"/>
    </source>
</evidence>
<name>RU2A_ARATH</name>
<organism>
    <name type="scientific">Arabidopsis thaliana</name>
    <name type="common">Mouse-ear cress</name>
    <dbReference type="NCBI Taxonomy" id="3702"/>
    <lineage>
        <taxon>Eukaryota</taxon>
        <taxon>Viridiplantae</taxon>
        <taxon>Streptophyta</taxon>
        <taxon>Embryophyta</taxon>
        <taxon>Tracheophyta</taxon>
        <taxon>Spermatophyta</taxon>
        <taxon>Magnoliopsida</taxon>
        <taxon>eudicotyledons</taxon>
        <taxon>Gunneridae</taxon>
        <taxon>Pentapetalae</taxon>
        <taxon>rosids</taxon>
        <taxon>malvids</taxon>
        <taxon>Brassicales</taxon>
        <taxon>Brassicaceae</taxon>
        <taxon>Camelineae</taxon>
        <taxon>Arabidopsis</taxon>
    </lineage>
</organism>
<sequence>MVKLTADLIWKSPHFFNAIKERELDLRGNKIPVIENLGATEDQFDTIDLSDNEIVKLENFPYLNRLGTLLINNNRITRINPNLGEFLPKLHSLVLTNNRLVNLVEIDPLASIPKLQYLSLLDNNITKKANYRLYVIHKLKSLRVLDFIKIKAKERAEAASLFSSKEAEEEVKKVSREEVKKVSETAENPETPKVVAPTAEQILAIKAAIINSQTIEEIARLEQALKFGQVPAGLIIPDPATNDSAPMEE</sequence>
<gene>
    <name evidence="4" type="primary">U2A'</name>
    <name evidence="6" type="ordered locus">At1g09760</name>
    <name evidence="7" type="ORF">F21M12.14</name>
</gene>
<feature type="chain" id="PRO_0000074178" description="U2 small nuclear ribonucleoprotein A'">
    <location>
        <begin position="1"/>
        <end position="249"/>
    </location>
</feature>
<feature type="repeat" description="LRR 1">
    <location>
        <begin position="20"/>
        <end position="41"/>
    </location>
</feature>
<feature type="repeat" description="LRR 2">
    <location>
        <begin position="43"/>
        <end position="64"/>
    </location>
</feature>
<feature type="repeat" description="LRR 3">
    <location>
        <begin position="65"/>
        <end position="87"/>
    </location>
</feature>
<feature type="repeat" description="LRR 4">
    <location>
        <begin position="89"/>
        <end position="110"/>
    </location>
</feature>
<feature type="domain" description="LRRCT">
    <location>
        <begin position="123"/>
        <end position="161"/>
    </location>
</feature>
<feature type="sequence conflict" description="In Ref. 1 and 5." evidence="5" ref="1 5">
    <original>D</original>
    <variation>H</variation>
    <location>
        <position position="107"/>
    </location>
</feature>
<feature type="sequence conflict" description="In Ref. 1; CAA48890." evidence="5" ref="1">
    <original>A</original>
    <variation>P</variation>
    <location>
        <position position="129"/>
    </location>
</feature>
<protein>
    <recommendedName>
        <fullName evidence="4">U2 small nuclear ribonucleoprotein A'</fullName>
        <shortName evidence="4">U2 snRNP A'</shortName>
    </recommendedName>
</protein>
<reference key="1">
    <citation type="submission" date="1992-11" db="EMBL/GenBank/DDBJ databases">
        <authorList>
            <person name="Yu D.Y."/>
            <person name="Quigley F."/>
            <person name="Mache R."/>
        </authorList>
    </citation>
    <scope>NUCLEOTIDE SEQUENCE</scope>
    <source>
        <strain>cv. C24</strain>
        <tissue>Flower bud</tissue>
    </source>
</reference>
<reference key="2">
    <citation type="journal article" date="2000" name="Nature">
        <title>Sequence and analysis of chromosome 1 of the plant Arabidopsis thaliana.</title>
        <authorList>
            <person name="Theologis A."/>
            <person name="Ecker J.R."/>
            <person name="Palm C.J."/>
            <person name="Federspiel N.A."/>
            <person name="Kaul S."/>
            <person name="White O."/>
            <person name="Alonso J."/>
            <person name="Altafi H."/>
            <person name="Araujo R."/>
            <person name="Bowman C.L."/>
            <person name="Brooks S.Y."/>
            <person name="Buehler E."/>
            <person name="Chan A."/>
            <person name="Chao Q."/>
            <person name="Chen H."/>
            <person name="Cheuk R.F."/>
            <person name="Chin C.W."/>
            <person name="Chung M.K."/>
            <person name="Conn L."/>
            <person name="Conway A.B."/>
            <person name="Conway A.R."/>
            <person name="Creasy T.H."/>
            <person name="Dewar K."/>
            <person name="Dunn P."/>
            <person name="Etgu P."/>
            <person name="Feldblyum T.V."/>
            <person name="Feng J.-D."/>
            <person name="Fong B."/>
            <person name="Fujii C.Y."/>
            <person name="Gill J.E."/>
            <person name="Goldsmith A.D."/>
            <person name="Haas B."/>
            <person name="Hansen N.F."/>
            <person name="Hughes B."/>
            <person name="Huizar L."/>
            <person name="Hunter J.L."/>
            <person name="Jenkins J."/>
            <person name="Johnson-Hopson C."/>
            <person name="Khan S."/>
            <person name="Khaykin E."/>
            <person name="Kim C.J."/>
            <person name="Koo H.L."/>
            <person name="Kremenetskaia I."/>
            <person name="Kurtz D.B."/>
            <person name="Kwan A."/>
            <person name="Lam B."/>
            <person name="Langin-Hooper S."/>
            <person name="Lee A."/>
            <person name="Lee J.M."/>
            <person name="Lenz C.A."/>
            <person name="Li J.H."/>
            <person name="Li Y.-P."/>
            <person name="Lin X."/>
            <person name="Liu S.X."/>
            <person name="Liu Z.A."/>
            <person name="Luros J.S."/>
            <person name="Maiti R."/>
            <person name="Marziali A."/>
            <person name="Militscher J."/>
            <person name="Miranda M."/>
            <person name="Nguyen M."/>
            <person name="Nierman W.C."/>
            <person name="Osborne B.I."/>
            <person name="Pai G."/>
            <person name="Peterson J."/>
            <person name="Pham P.K."/>
            <person name="Rizzo M."/>
            <person name="Rooney T."/>
            <person name="Rowley D."/>
            <person name="Sakano H."/>
            <person name="Salzberg S.L."/>
            <person name="Schwartz J.R."/>
            <person name="Shinn P."/>
            <person name="Southwick A.M."/>
            <person name="Sun H."/>
            <person name="Tallon L.J."/>
            <person name="Tambunga G."/>
            <person name="Toriumi M.J."/>
            <person name="Town C.D."/>
            <person name="Utterback T."/>
            <person name="Van Aken S."/>
            <person name="Vaysberg M."/>
            <person name="Vysotskaia V.S."/>
            <person name="Walker M."/>
            <person name="Wu D."/>
            <person name="Yu G."/>
            <person name="Fraser C.M."/>
            <person name="Venter J.C."/>
            <person name="Davis R.W."/>
        </authorList>
    </citation>
    <scope>NUCLEOTIDE SEQUENCE [LARGE SCALE GENOMIC DNA]</scope>
    <source>
        <strain>cv. Columbia</strain>
    </source>
</reference>
<reference key="3">
    <citation type="journal article" date="2017" name="Plant J.">
        <title>Araport11: a complete reannotation of the Arabidopsis thaliana reference genome.</title>
        <authorList>
            <person name="Cheng C.Y."/>
            <person name="Krishnakumar V."/>
            <person name="Chan A.P."/>
            <person name="Thibaud-Nissen F."/>
            <person name="Schobel S."/>
            <person name="Town C.D."/>
        </authorList>
    </citation>
    <scope>GENOME REANNOTATION</scope>
    <source>
        <strain>cv. Columbia</strain>
    </source>
</reference>
<reference key="4">
    <citation type="journal article" date="2003" name="Science">
        <title>Empirical analysis of transcriptional activity in the Arabidopsis genome.</title>
        <authorList>
            <person name="Yamada K."/>
            <person name="Lim J."/>
            <person name="Dale J.M."/>
            <person name="Chen H."/>
            <person name="Shinn P."/>
            <person name="Palm C.J."/>
            <person name="Southwick A.M."/>
            <person name="Wu H.C."/>
            <person name="Kim C.J."/>
            <person name="Nguyen M."/>
            <person name="Pham P.K."/>
            <person name="Cheuk R.F."/>
            <person name="Karlin-Newmann G."/>
            <person name="Liu S.X."/>
            <person name="Lam B."/>
            <person name="Sakano H."/>
            <person name="Wu T."/>
            <person name="Yu G."/>
            <person name="Miranda M."/>
            <person name="Quach H.L."/>
            <person name="Tripp M."/>
            <person name="Chang C.H."/>
            <person name="Lee J.M."/>
            <person name="Toriumi M.J."/>
            <person name="Chan M.M."/>
            <person name="Tang C.C."/>
            <person name="Onodera C.S."/>
            <person name="Deng J.M."/>
            <person name="Akiyama K."/>
            <person name="Ansari Y."/>
            <person name="Arakawa T."/>
            <person name="Banh J."/>
            <person name="Banno F."/>
            <person name="Bowser L."/>
            <person name="Brooks S.Y."/>
            <person name="Carninci P."/>
            <person name="Chao Q."/>
            <person name="Choy N."/>
            <person name="Enju A."/>
            <person name="Goldsmith A.D."/>
            <person name="Gurjal M."/>
            <person name="Hansen N.F."/>
            <person name="Hayashizaki Y."/>
            <person name="Johnson-Hopson C."/>
            <person name="Hsuan V.W."/>
            <person name="Iida K."/>
            <person name="Karnes M."/>
            <person name="Khan S."/>
            <person name="Koesema E."/>
            <person name="Ishida J."/>
            <person name="Jiang P.X."/>
            <person name="Jones T."/>
            <person name="Kawai J."/>
            <person name="Kamiya A."/>
            <person name="Meyers C."/>
            <person name="Nakajima M."/>
            <person name="Narusaka M."/>
            <person name="Seki M."/>
            <person name="Sakurai T."/>
            <person name="Satou M."/>
            <person name="Tamse R."/>
            <person name="Vaysberg M."/>
            <person name="Wallender E.K."/>
            <person name="Wong C."/>
            <person name="Yamamura Y."/>
            <person name="Yuan S."/>
            <person name="Shinozaki K."/>
            <person name="Davis R.W."/>
            <person name="Theologis A."/>
            <person name="Ecker J.R."/>
        </authorList>
    </citation>
    <scope>NUCLEOTIDE SEQUENCE [LARGE SCALE MRNA]</scope>
    <source>
        <strain>cv. Columbia</strain>
    </source>
</reference>
<reference key="5">
    <citation type="journal article" date="1993" name="Plant J.">
        <title>An inventory of 1152 expressed sequence tags obtained by partial sequencing of cDNAs from Arabidopsis thaliana.</title>
        <authorList>
            <person name="Hoefte H."/>
            <person name="Desprez T."/>
            <person name="Amselem J."/>
            <person name="Chiapello H."/>
            <person name="Rouze P."/>
            <person name="Caboche M."/>
            <person name="Moisan A."/>
            <person name="Jourjon M.-F."/>
            <person name="Charpenteau J.-L."/>
            <person name="Berthomieu P."/>
            <person name="Guerrier D."/>
            <person name="Giraudat J."/>
            <person name="Quigley F."/>
            <person name="Thomas F."/>
            <person name="Yu D.-Y."/>
            <person name="Mache R."/>
            <person name="Raynal M."/>
            <person name="Cooke R."/>
            <person name="Grellet F."/>
            <person name="Delseny M."/>
            <person name="Parmentier Y."/>
            <person name="de Marcillac G."/>
            <person name="Gigot C."/>
            <person name="Fleck J."/>
            <person name="Philipps G."/>
            <person name="Axelos M."/>
            <person name="Bardet C."/>
            <person name="Tremousaygue D."/>
            <person name="Lescure B."/>
        </authorList>
    </citation>
    <scope>NUCLEOTIDE SEQUENCE [LARGE SCALE MRNA] OF 1-110</scope>
    <source>
        <strain>cv. C24</strain>
        <tissue>Flower bud</tissue>
    </source>
</reference>
<reference key="6">
    <citation type="journal article" date="2017" name="Proc. Natl. Acad. Sci. U.S.A.">
        <title>SPF45-related splicing factor for phytochrome signaling promotes photomorphogenesis by regulating pre-mRNA splicing in Arabidopsis.</title>
        <authorList>
            <person name="Xin R."/>
            <person name="Zhu L."/>
            <person name="Salome P.A."/>
            <person name="Mancini E."/>
            <person name="Marshall C.M."/>
            <person name="Harmon F.G."/>
            <person name="Yanovsky M.J."/>
            <person name="Weigel D."/>
            <person name="Huq E."/>
        </authorList>
    </citation>
    <scope>SUBCELLULAR LOCATION</scope>
    <source>
        <strain>cv. Columbia</strain>
    </source>
</reference>
<reference key="7">
    <citation type="journal article" date="2022" name="Proc. Natl. Acad. Sci. U.S.A.">
        <title>SWAP1-SFPS-RRC1 splicing factor complex modulates pre-mRNA splicing to promote photomorphogenesis in Arabidopsis.</title>
        <authorList>
            <person name="Kathare P.K."/>
            <person name="Xin R."/>
            <person name="Ganesan A.S."/>
            <person name="June V.M."/>
            <person name="Reddy A.S.N."/>
            <person name="Huq E."/>
        </authorList>
    </citation>
    <scope>SUBCELLULAR LOCATION</scope>
    <source>
        <strain>cv. Columbia</strain>
    </source>
</reference>